<evidence type="ECO:0000255" key="1">
    <source>
        <dbReference type="HAMAP-Rule" id="MF_00076"/>
    </source>
</evidence>
<name>HIS7_RHILO</name>
<accession>Q98CT7</accession>
<reference key="1">
    <citation type="journal article" date="2000" name="DNA Res.">
        <title>Complete genome structure of the nitrogen-fixing symbiotic bacterium Mesorhizobium loti.</title>
        <authorList>
            <person name="Kaneko T."/>
            <person name="Nakamura Y."/>
            <person name="Sato S."/>
            <person name="Asamizu E."/>
            <person name="Kato T."/>
            <person name="Sasamoto S."/>
            <person name="Watanabe A."/>
            <person name="Idesawa K."/>
            <person name="Ishikawa A."/>
            <person name="Kawashima K."/>
            <person name="Kimura T."/>
            <person name="Kishida Y."/>
            <person name="Kiyokawa C."/>
            <person name="Kohara M."/>
            <person name="Matsumoto M."/>
            <person name="Matsuno A."/>
            <person name="Mochizuki Y."/>
            <person name="Nakayama S."/>
            <person name="Nakazaki N."/>
            <person name="Shimpo S."/>
            <person name="Sugimoto M."/>
            <person name="Takeuchi C."/>
            <person name="Yamada M."/>
            <person name="Tabata S."/>
        </authorList>
    </citation>
    <scope>NUCLEOTIDE SEQUENCE [LARGE SCALE GENOMIC DNA]</scope>
    <source>
        <strain>LMG 29417 / CECT 9101 / MAFF 303099</strain>
    </source>
</reference>
<proteinExistence type="inferred from homology"/>
<sequence>MAPRSAEASRKTKETDISVSVHVDGSGKSDIATGVGFFDHMLDQLSRHSLIDMTVRAKGDLHIDDHHTVEDTGIALGQALTKALGERRGIMRYASIDLAMDETLTRAAIDVSGRPFLVWNVSFSSPKIGTFDTELVREFFQALAQNAGITLHVTNHYGANNHHIAETCFKAVARALRAALEPDPRQPDAVPSTKGSLKG</sequence>
<feature type="chain" id="PRO_0000158160" description="Imidazoleglycerol-phosphate dehydratase">
    <location>
        <begin position="1"/>
        <end position="199"/>
    </location>
</feature>
<dbReference type="EC" id="4.2.1.19" evidence="1"/>
<dbReference type="EMBL" id="BA000012">
    <property type="protein sequence ID" value="BAB51534.1"/>
    <property type="molecule type" value="Genomic_DNA"/>
</dbReference>
<dbReference type="RefSeq" id="WP_010912875.1">
    <property type="nucleotide sequence ID" value="NC_002678.2"/>
</dbReference>
<dbReference type="SMR" id="Q98CT7"/>
<dbReference type="GeneID" id="66680763"/>
<dbReference type="KEGG" id="mlo:mlr5008"/>
<dbReference type="eggNOG" id="COG0131">
    <property type="taxonomic scope" value="Bacteria"/>
</dbReference>
<dbReference type="HOGENOM" id="CLU_044308_3_0_5"/>
<dbReference type="UniPathway" id="UPA00031">
    <property type="reaction ID" value="UER00011"/>
</dbReference>
<dbReference type="Proteomes" id="UP000000552">
    <property type="component" value="Chromosome"/>
</dbReference>
<dbReference type="GO" id="GO:0005737">
    <property type="term" value="C:cytoplasm"/>
    <property type="evidence" value="ECO:0007669"/>
    <property type="project" value="UniProtKB-SubCell"/>
</dbReference>
<dbReference type="GO" id="GO:0004424">
    <property type="term" value="F:imidazoleglycerol-phosphate dehydratase activity"/>
    <property type="evidence" value="ECO:0007669"/>
    <property type="project" value="UniProtKB-UniRule"/>
</dbReference>
<dbReference type="GO" id="GO:0000105">
    <property type="term" value="P:L-histidine biosynthetic process"/>
    <property type="evidence" value="ECO:0007669"/>
    <property type="project" value="UniProtKB-UniRule"/>
</dbReference>
<dbReference type="CDD" id="cd07914">
    <property type="entry name" value="IGPD"/>
    <property type="match status" value="1"/>
</dbReference>
<dbReference type="FunFam" id="3.30.230.40:FF:000001">
    <property type="entry name" value="Imidazoleglycerol-phosphate dehydratase HisB"/>
    <property type="match status" value="1"/>
</dbReference>
<dbReference type="FunFam" id="3.30.230.40:FF:000003">
    <property type="entry name" value="Imidazoleglycerol-phosphate dehydratase HisB"/>
    <property type="match status" value="1"/>
</dbReference>
<dbReference type="Gene3D" id="3.30.230.40">
    <property type="entry name" value="Imidazole glycerol phosphate dehydratase, domain 1"/>
    <property type="match status" value="2"/>
</dbReference>
<dbReference type="HAMAP" id="MF_00076">
    <property type="entry name" value="HisB"/>
    <property type="match status" value="1"/>
</dbReference>
<dbReference type="InterPro" id="IPR038494">
    <property type="entry name" value="IGPD_sf"/>
</dbReference>
<dbReference type="InterPro" id="IPR000807">
    <property type="entry name" value="ImidazoleglycerolP_deHydtase"/>
</dbReference>
<dbReference type="InterPro" id="IPR020565">
    <property type="entry name" value="ImidazoleglycerP_deHydtase_CS"/>
</dbReference>
<dbReference type="InterPro" id="IPR020568">
    <property type="entry name" value="Ribosomal_Su5_D2-typ_SF"/>
</dbReference>
<dbReference type="NCBIfam" id="NF002109">
    <property type="entry name" value="PRK00951.1-5"/>
    <property type="match status" value="1"/>
</dbReference>
<dbReference type="NCBIfam" id="NF002111">
    <property type="entry name" value="PRK00951.2-1"/>
    <property type="match status" value="1"/>
</dbReference>
<dbReference type="NCBIfam" id="NF002114">
    <property type="entry name" value="PRK00951.2-4"/>
    <property type="match status" value="1"/>
</dbReference>
<dbReference type="PANTHER" id="PTHR23133:SF2">
    <property type="entry name" value="IMIDAZOLEGLYCEROL-PHOSPHATE DEHYDRATASE"/>
    <property type="match status" value="1"/>
</dbReference>
<dbReference type="PANTHER" id="PTHR23133">
    <property type="entry name" value="IMIDAZOLEGLYCEROL-PHOSPHATE DEHYDRATASE HIS7"/>
    <property type="match status" value="1"/>
</dbReference>
<dbReference type="Pfam" id="PF00475">
    <property type="entry name" value="IGPD"/>
    <property type="match status" value="1"/>
</dbReference>
<dbReference type="SUPFAM" id="SSF54211">
    <property type="entry name" value="Ribosomal protein S5 domain 2-like"/>
    <property type="match status" value="2"/>
</dbReference>
<dbReference type="PROSITE" id="PS00954">
    <property type="entry name" value="IGP_DEHYDRATASE_1"/>
    <property type="match status" value="1"/>
</dbReference>
<dbReference type="PROSITE" id="PS00955">
    <property type="entry name" value="IGP_DEHYDRATASE_2"/>
    <property type="match status" value="1"/>
</dbReference>
<protein>
    <recommendedName>
        <fullName evidence="1">Imidazoleglycerol-phosphate dehydratase</fullName>
        <shortName evidence="1">IGPD</shortName>
        <ecNumber evidence="1">4.2.1.19</ecNumber>
    </recommendedName>
</protein>
<comment type="catalytic activity">
    <reaction evidence="1">
        <text>D-erythro-1-(imidazol-4-yl)glycerol 3-phosphate = 3-(imidazol-4-yl)-2-oxopropyl phosphate + H2O</text>
        <dbReference type="Rhea" id="RHEA:11040"/>
        <dbReference type="ChEBI" id="CHEBI:15377"/>
        <dbReference type="ChEBI" id="CHEBI:57766"/>
        <dbReference type="ChEBI" id="CHEBI:58278"/>
        <dbReference type="EC" id="4.2.1.19"/>
    </reaction>
</comment>
<comment type="pathway">
    <text evidence="1">Amino-acid biosynthesis; L-histidine biosynthesis; L-histidine from 5-phospho-alpha-D-ribose 1-diphosphate: step 6/9.</text>
</comment>
<comment type="subcellular location">
    <subcellularLocation>
        <location evidence="1">Cytoplasm</location>
    </subcellularLocation>
</comment>
<comment type="similarity">
    <text evidence="1">Belongs to the imidazoleglycerol-phosphate dehydratase family.</text>
</comment>
<organism>
    <name type="scientific">Mesorhizobium japonicum (strain LMG 29417 / CECT 9101 / MAFF 303099)</name>
    <name type="common">Mesorhizobium loti (strain MAFF 303099)</name>
    <dbReference type="NCBI Taxonomy" id="266835"/>
    <lineage>
        <taxon>Bacteria</taxon>
        <taxon>Pseudomonadati</taxon>
        <taxon>Pseudomonadota</taxon>
        <taxon>Alphaproteobacteria</taxon>
        <taxon>Hyphomicrobiales</taxon>
        <taxon>Phyllobacteriaceae</taxon>
        <taxon>Mesorhizobium</taxon>
    </lineage>
</organism>
<keyword id="KW-0028">Amino-acid biosynthesis</keyword>
<keyword id="KW-0963">Cytoplasm</keyword>
<keyword id="KW-0368">Histidine biosynthesis</keyword>
<keyword id="KW-0456">Lyase</keyword>
<gene>
    <name evidence="1" type="primary">hisB</name>
    <name type="ordered locus">mlr5008</name>
</gene>